<dbReference type="EC" id="2.7.4.8" evidence="1"/>
<dbReference type="EMBL" id="CR848038">
    <property type="protein sequence ID" value="CAH64070.1"/>
    <property type="molecule type" value="Genomic_DNA"/>
</dbReference>
<dbReference type="RefSeq" id="WP_006344240.1">
    <property type="nucleotide sequence ID" value="NC_004552.2"/>
</dbReference>
<dbReference type="SMR" id="Q5L5M1"/>
<dbReference type="KEGG" id="cab:CAB624"/>
<dbReference type="eggNOG" id="COG0194">
    <property type="taxonomic scope" value="Bacteria"/>
</dbReference>
<dbReference type="HOGENOM" id="CLU_001715_1_1_0"/>
<dbReference type="OrthoDB" id="9808150at2"/>
<dbReference type="Proteomes" id="UP000001012">
    <property type="component" value="Chromosome"/>
</dbReference>
<dbReference type="GO" id="GO:0005829">
    <property type="term" value="C:cytosol"/>
    <property type="evidence" value="ECO:0007669"/>
    <property type="project" value="TreeGrafter"/>
</dbReference>
<dbReference type="GO" id="GO:0005524">
    <property type="term" value="F:ATP binding"/>
    <property type="evidence" value="ECO:0007669"/>
    <property type="project" value="UniProtKB-UniRule"/>
</dbReference>
<dbReference type="GO" id="GO:0004385">
    <property type="term" value="F:guanylate kinase activity"/>
    <property type="evidence" value="ECO:0007669"/>
    <property type="project" value="UniProtKB-UniRule"/>
</dbReference>
<dbReference type="CDD" id="cd00071">
    <property type="entry name" value="GMPK"/>
    <property type="match status" value="1"/>
</dbReference>
<dbReference type="FunFam" id="3.30.63.10:FF:000005">
    <property type="entry name" value="Guanylate kinase"/>
    <property type="match status" value="1"/>
</dbReference>
<dbReference type="Gene3D" id="3.40.50.300">
    <property type="entry name" value="P-loop containing nucleotide triphosphate hydrolases"/>
    <property type="match status" value="1"/>
</dbReference>
<dbReference type="HAMAP" id="MF_00328">
    <property type="entry name" value="Guanylate_kinase"/>
    <property type="match status" value="1"/>
</dbReference>
<dbReference type="InterPro" id="IPR008145">
    <property type="entry name" value="GK/Ca_channel_bsu"/>
</dbReference>
<dbReference type="InterPro" id="IPR008144">
    <property type="entry name" value="Guanylate_kin-like_dom"/>
</dbReference>
<dbReference type="InterPro" id="IPR017665">
    <property type="entry name" value="Guanylate_kinase"/>
</dbReference>
<dbReference type="InterPro" id="IPR020590">
    <property type="entry name" value="Guanylate_kinase_CS"/>
</dbReference>
<dbReference type="InterPro" id="IPR027417">
    <property type="entry name" value="P-loop_NTPase"/>
</dbReference>
<dbReference type="NCBIfam" id="TIGR03263">
    <property type="entry name" value="guanyl_kin"/>
    <property type="match status" value="1"/>
</dbReference>
<dbReference type="PANTHER" id="PTHR23117:SF13">
    <property type="entry name" value="GUANYLATE KINASE"/>
    <property type="match status" value="1"/>
</dbReference>
<dbReference type="PANTHER" id="PTHR23117">
    <property type="entry name" value="GUANYLATE KINASE-RELATED"/>
    <property type="match status" value="1"/>
</dbReference>
<dbReference type="Pfam" id="PF00625">
    <property type="entry name" value="Guanylate_kin"/>
    <property type="match status" value="1"/>
</dbReference>
<dbReference type="SMART" id="SM00072">
    <property type="entry name" value="GuKc"/>
    <property type="match status" value="1"/>
</dbReference>
<dbReference type="SUPFAM" id="SSF52540">
    <property type="entry name" value="P-loop containing nucleoside triphosphate hydrolases"/>
    <property type="match status" value="1"/>
</dbReference>
<dbReference type="PROSITE" id="PS00856">
    <property type="entry name" value="GUANYLATE_KINASE_1"/>
    <property type="match status" value="1"/>
</dbReference>
<dbReference type="PROSITE" id="PS50052">
    <property type="entry name" value="GUANYLATE_KINASE_2"/>
    <property type="match status" value="1"/>
</dbReference>
<reference key="1">
    <citation type="journal article" date="2005" name="Genome Res.">
        <title>The Chlamydophila abortus genome sequence reveals an array of variable proteins that contribute to interspecies variation.</title>
        <authorList>
            <person name="Thomson N.R."/>
            <person name="Yeats C."/>
            <person name="Bell K."/>
            <person name="Holden M.T.G."/>
            <person name="Bentley S.D."/>
            <person name="Livingstone M."/>
            <person name="Cerdeno-Tarraga A.-M."/>
            <person name="Harris B."/>
            <person name="Doggett J."/>
            <person name="Ormond D."/>
            <person name="Mungall K."/>
            <person name="Clarke K."/>
            <person name="Feltwell T."/>
            <person name="Hance Z."/>
            <person name="Sanders M."/>
            <person name="Quail M.A."/>
            <person name="Price C."/>
            <person name="Barrell B.G."/>
            <person name="Parkhill J."/>
            <person name="Longbottom D."/>
        </authorList>
    </citation>
    <scope>NUCLEOTIDE SEQUENCE [LARGE SCALE GENOMIC DNA]</scope>
    <source>
        <strain>DSM 27085 / S26/3</strain>
    </source>
</reference>
<sequence>MKNKVRVPFSPDHPLCAPKLFTISAPAGAGKTTLVRMLAREFPDSFQKTLSLTTRAPRPEEIPGVDYQFVSQEEFQRRLDNEDFLEWVALFGEYYGTSRLGIDEIWKSGRHAVAVIDVEGALVLQSKIPTVAIFISAPSQEELERRLKQRGSEQDTQRQERLQHSLIEQAAADKFEYVIINDDLEKSYEVLKSIFIAEEHRNVL</sequence>
<comment type="function">
    <text evidence="1">Essential for recycling GMP and indirectly, cGMP.</text>
</comment>
<comment type="catalytic activity">
    <reaction evidence="1">
        <text>GMP + ATP = GDP + ADP</text>
        <dbReference type="Rhea" id="RHEA:20780"/>
        <dbReference type="ChEBI" id="CHEBI:30616"/>
        <dbReference type="ChEBI" id="CHEBI:58115"/>
        <dbReference type="ChEBI" id="CHEBI:58189"/>
        <dbReference type="ChEBI" id="CHEBI:456216"/>
        <dbReference type="EC" id="2.7.4.8"/>
    </reaction>
</comment>
<comment type="subcellular location">
    <subcellularLocation>
        <location evidence="1">Cytoplasm</location>
    </subcellularLocation>
</comment>
<comment type="similarity">
    <text evidence="1">Belongs to the guanylate kinase family.</text>
</comment>
<name>KGUA_CHLAB</name>
<proteinExistence type="inferred from homology"/>
<gene>
    <name evidence="1" type="primary">gmk</name>
    <name type="ordered locus">CAB624</name>
</gene>
<feature type="chain" id="PRO_0000266303" description="Guanylate kinase">
    <location>
        <begin position="1"/>
        <end position="204"/>
    </location>
</feature>
<feature type="domain" description="Guanylate kinase-like" evidence="1">
    <location>
        <begin position="18"/>
        <end position="196"/>
    </location>
</feature>
<feature type="binding site" evidence="1">
    <location>
        <begin position="25"/>
        <end position="32"/>
    </location>
    <ligand>
        <name>ATP</name>
        <dbReference type="ChEBI" id="CHEBI:30616"/>
    </ligand>
</feature>
<keyword id="KW-0067">ATP-binding</keyword>
<keyword id="KW-0963">Cytoplasm</keyword>
<keyword id="KW-0418">Kinase</keyword>
<keyword id="KW-0547">Nucleotide-binding</keyword>
<keyword id="KW-0808">Transferase</keyword>
<organism>
    <name type="scientific">Chlamydia abortus (strain DSM 27085 / S26/3)</name>
    <name type="common">Chlamydophila abortus</name>
    <dbReference type="NCBI Taxonomy" id="218497"/>
    <lineage>
        <taxon>Bacteria</taxon>
        <taxon>Pseudomonadati</taxon>
        <taxon>Chlamydiota</taxon>
        <taxon>Chlamydiia</taxon>
        <taxon>Chlamydiales</taxon>
        <taxon>Chlamydiaceae</taxon>
        <taxon>Chlamydia/Chlamydophila group</taxon>
        <taxon>Chlamydia</taxon>
    </lineage>
</organism>
<accession>Q5L5M1</accession>
<evidence type="ECO:0000255" key="1">
    <source>
        <dbReference type="HAMAP-Rule" id="MF_00328"/>
    </source>
</evidence>
<protein>
    <recommendedName>
        <fullName evidence="1">Guanylate kinase</fullName>
        <ecNumber evidence="1">2.7.4.8</ecNumber>
    </recommendedName>
    <alternativeName>
        <fullName evidence="1">GMP kinase</fullName>
    </alternativeName>
</protein>